<evidence type="ECO:0000250" key="1"/>
<evidence type="ECO:0000255" key="2">
    <source>
        <dbReference type="HAMAP-Rule" id="MF_00223"/>
    </source>
</evidence>
<name>GCH1_SULAC</name>
<proteinExistence type="inferred from homology"/>
<comment type="catalytic activity">
    <reaction evidence="2">
        <text>GTP + H2O = 7,8-dihydroneopterin 3'-triphosphate + formate + H(+)</text>
        <dbReference type="Rhea" id="RHEA:17473"/>
        <dbReference type="ChEBI" id="CHEBI:15377"/>
        <dbReference type="ChEBI" id="CHEBI:15378"/>
        <dbReference type="ChEBI" id="CHEBI:15740"/>
        <dbReference type="ChEBI" id="CHEBI:37565"/>
        <dbReference type="ChEBI" id="CHEBI:58462"/>
        <dbReference type="EC" id="3.5.4.16"/>
    </reaction>
</comment>
<comment type="pathway">
    <text evidence="2">Cofactor biosynthesis; 7,8-dihydroneopterin triphosphate biosynthesis; 7,8-dihydroneopterin triphosphate from GTP: step 1/1.</text>
</comment>
<comment type="subunit">
    <text evidence="1">Toroid-shaped homodecamer, composed of two pentamers of five dimers.</text>
</comment>
<comment type="similarity">
    <text evidence="2">Belongs to the GTP cyclohydrolase I family.</text>
</comment>
<sequence length="209" mass="23396">MEQESLNQERLVEEIAKRVKEILQLIGEDTEREGLKETPERVAKALLEMTSALRSPQPYIKVFSLAENENSSVEDQIVLVKDISFSSLCEHHLLPIIGKVHVAYVVGKSGKVAGLSKIIRLVNYYASRPQIQERLVEQIAEAIMKSDIQPKGVMVIGDALHMCTYVRGVKDREASLISLSTRGIFSTKPSLKSQVFRLINTSKKSSTFL</sequence>
<accession>Q4J8S2</accession>
<dbReference type="EC" id="3.5.4.16" evidence="2"/>
<dbReference type="EMBL" id="CP000077">
    <property type="protein sequence ID" value="AAY80802.1"/>
    <property type="molecule type" value="Genomic_DNA"/>
</dbReference>
<dbReference type="RefSeq" id="WP_011278304.1">
    <property type="nucleotide sequence ID" value="NC_007181.1"/>
</dbReference>
<dbReference type="SMR" id="Q4J8S2"/>
<dbReference type="STRING" id="330779.Saci_1481"/>
<dbReference type="GeneID" id="14551976"/>
<dbReference type="GeneID" id="78441824"/>
<dbReference type="KEGG" id="sai:Saci_1481"/>
<dbReference type="PATRIC" id="fig|330779.12.peg.1425"/>
<dbReference type="eggNOG" id="arCOG04542">
    <property type="taxonomic scope" value="Archaea"/>
</dbReference>
<dbReference type="HOGENOM" id="CLU_049768_3_2_2"/>
<dbReference type="UniPathway" id="UPA00848">
    <property type="reaction ID" value="UER00151"/>
</dbReference>
<dbReference type="Proteomes" id="UP000001018">
    <property type="component" value="Chromosome"/>
</dbReference>
<dbReference type="GO" id="GO:0005737">
    <property type="term" value="C:cytoplasm"/>
    <property type="evidence" value="ECO:0007669"/>
    <property type="project" value="TreeGrafter"/>
</dbReference>
<dbReference type="GO" id="GO:0005525">
    <property type="term" value="F:GTP binding"/>
    <property type="evidence" value="ECO:0007669"/>
    <property type="project" value="UniProtKB-KW"/>
</dbReference>
<dbReference type="GO" id="GO:0003934">
    <property type="term" value="F:GTP cyclohydrolase I activity"/>
    <property type="evidence" value="ECO:0007669"/>
    <property type="project" value="UniProtKB-UniRule"/>
</dbReference>
<dbReference type="GO" id="GO:0008270">
    <property type="term" value="F:zinc ion binding"/>
    <property type="evidence" value="ECO:0007669"/>
    <property type="project" value="UniProtKB-UniRule"/>
</dbReference>
<dbReference type="GO" id="GO:0006730">
    <property type="term" value="P:one-carbon metabolic process"/>
    <property type="evidence" value="ECO:0007669"/>
    <property type="project" value="UniProtKB-UniRule"/>
</dbReference>
<dbReference type="GO" id="GO:0006729">
    <property type="term" value="P:tetrahydrobiopterin biosynthetic process"/>
    <property type="evidence" value="ECO:0007669"/>
    <property type="project" value="TreeGrafter"/>
</dbReference>
<dbReference type="GO" id="GO:0046654">
    <property type="term" value="P:tetrahydrofolate biosynthetic process"/>
    <property type="evidence" value="ECO:0007669"/>
    <property type="project" value="UniProtKB-UniRule"/>
</dbReference>
<dbReference type="FunFam" id="3.30.1130.10:FF:000001">
    <property type="entry name" value="GTP cyclohydrolase 1"/>
    <property type="match status" value="1"/>
</dbReference>
<dbReference type="Gene3D" id="1.10.286.10">
    <property type="match status" value="1"/>
</dbReference>
<dbReference type="Gene3D" id="3.30.1130.10">
    <property type="match status" value="1"/>
</dbReference>
<dbReference type="HAMAP" id="MF_00223">
    <property type="entry name" value="FolE"/>
    <property type="match status" value="1"/>
</dbReference>
<dbReference type="InterPro" id="IPR043133">
    <property type="entry name" value="GTP-CH-I_C/QueF"/>
</dbReference>
<dbReference type="InterPro" id="IPR043134">
    <property type="entry name" value="GTP-CH-I_N"/>
</dbReference>
<dbReference type="InterPro" id="IPR001474">
    <property type="entry name" value="GTP_CycHdrlase_I"/>
</dbReference>
<dbReference type="InterPro" id="IPR018234">
    <property type="entry name" value="GTP_CycHdrlase_I_CS"/>
</dbReference>
<dbReference type="InterPro" id="IPR020602">
    <property type="entry name" value="GTP_CycHdrlase_I_dom"/>
</dbReference>
<dbReference type="NCBIfam" id="NF006825">
    <property type="entry name" value="PRK09347.1-2"/>
    <property type="match status" value="1"/>
</dbReference>
<dbReference type="NCBIfam" id="NF006826">
    <property type="entry name" value="PRK09347.1-3"/>
    <property type="match status" value="1"/>
</dbReference>
<dbReference type="PANTHER" id="PTHR11109:SF7">
    <property type="entry name" value="GTP CYCLOHYDROLASE 1"/>
    <property type="match status" value="1"/>
</dbReference>
<dbReference type="PANTHER" id="PTHR11109">
    <property type="entry name" value="GTP CYCLOHYDROLASE I"/>
    <property type="match status" value="1"/>
</dbReference>
<dbReference type="Pfam" id="PF01227">
    <property type="entry name" value="GTP_cyclohydroI"/>
    <property type="match status" value="1"/>
</dbReference>
<dbReference type="SUPFAM" id="SSF55620">
    <property type="entry name" value="Tetrahydrobiopterin biosynthesis enzymes-like"/>
    <property type="match status" value="1"/>
</dbReference>
<dbReference type="PROSITE" id="PS00859">
    <property type="entry name" value="GTP_CYCLOHYDROL_1_1"/>
    <property type="match status" value="1"/>
</dbReference>
<dbReference type="PROSITE" id="PS00860">
    <property type="entry name" value="GTP_CYCLOHYDROL_1_2"/>
    <property type="match status" value="1"/>
</dbReference>
<organism>
    <name type="scientific">Sulfolobus acidocaldarius (strain ATCC 33909 / DSM 639 / JCM 8929 / NBRC 15157 / NCIMB 11770)</name>
    <dbReference type="NCBI Taxonomy" id="330779"/>
    <lineage>
        <taxon>Archaea</taxon>
        <taxon>Thermoproteota</taxon>
        <taxon>Thermoprotei</taxon>
        <taxon>Sulfolobales</taxon>
        <taxon>Sulfolobaceae</taxon>
        <taxon>Sulfolobus</taxon>
    </lineage>
</organism>
<keyword id="KW-0342">GTP-binding</keyword>
<keyword id="KW-0378">Hydrolase</keyword>
<keyword id="KW-0479">Metal-binding</keyword>
<keyword id="KW-0547">Nucleotide-binding</keyword>
<keyword id="KW-0554">One-carbon metabolism</keyword>
<keyword id="KW-1185">Reference proteome</keyword>
<keyword id="KW-0862">Zinc</keyword>
<feature type="chain" id="PRO_0000119474" description="GTP cyclohydrolase 1">
    <location>
        <begin position="1"/>
        <end position="209"/>
    </location>
</feature>
<feature type="binding site" evidence="2">
    <location>
        <position position="89"/>
    </location>
    <ligand>
        <name>Zn(2+)</name>
        <dbReference type="ChEBI" id="CHEBI:29105"/>
    </ligand>
</feature>
<feature type="binding site" evidence="2">
    <location>
        <position position="92"/>
    </location>
    <ligand>
        <name>Zn(2+)</name>
        <dbReference type="ChEBI" id="CHEBI:29105"/>
    </ligand>
</feature>
<feature type="binding site" evidence="2">
    <location>
        <position position="163"/>
    </location>
    <ligand>
        <name>Zn(2+)</name>
        <dbReference type="ChEBI" id="CHEBI:29105"/>
    </ligand>
</feature>
<gene>
    <name evidence="2" type="primary">folE</name>
    <name type="ordered locus">Saci_1481</name>
</gene>
<protein>
    <recommendedName>
        <fullName evidence="2">GTP cyclohydrolase 1</fullName>
        <ecNumber evidence="2">3.5.4.16</ecNumber>
    </recommendedName>
    <alternativeName>
        <fullName evidence="2">GTP cyclohydrolase I</fullName>
        <shortName evidence="2">GTP-CH-I</shortName>
    </alternativeName>
</protein>
<reference key="1">
    <citation type="journal article" date="2005" name="J. Bacteriol.">
        <title>The genome of Sulfolobus acidocaldarius, a model organism of the Crenarchaeota.</title>
        <authorList>
            <person name="Chen L."/>
            <person name="Bruegger K."/>
            <person name="Skovgaard M."/>
            <person name="Redder P."/>
            <person name="She Q."/>
            <person name="Torarinsson E."/>
            <person name="Greve B."/>
            <person name="Awayez M."/>
            <person name="Zibat A."/>
            <person name="Klenk H.-P."/>
            <person name="Garrett R.A."/>
        </authorList>
    </citation>
    <scope>NUCLEOTIDE SEQUENCE [LARGE SCALE GENOMIC DNA]</scope>
    <source>
        <strain>ATCC 33909 / DSM 639 / JCM 8929 / NBRC 15157 / NCIMB 11770</strain>
    </source>
</reference>